<organism>
    <name type="scientific">Roseobacter denitrificans (strain ATCC 33942 / OCh 114)</name>
    <name type="common">Erythrobacter sp. (strain OCh 114)</name>
    <name type="synonym">Roseobacter denitrificans</name>
    <dbReference type="NCBI Taxonomy" id="375451"/>
    <lineage>
        <taxon>Bacteria</taxon>
        <taxon>Pseudomonadati</taxon>
        <taxon>Pseudomonadota</taxon>
        <taxon>Alphaproteobacteria</taxon>
        <taxon>Rhodobacterales</taxon>
        <taxon>Roseobacteraceae</taxon>
        <taxon>Roseobacter</taxon>
    </lineage>
</organism>
<gene>
    <name evidence="1" type="primary">rpmG</name>
    <name type="ordered locus">RD1_1997</name>
</gene>
<reference key="1">
    <citation type="journal article" date="2007" name="J. Bacteriol.">
        <title>The complete genome sequence of Roseobacter denitrificans reveals a mixotrophic rather than photosynthetic metabolism.</title>
        <authorList>
            <person name="Swingley W.D."/>
            <person name="Sadekar S."/>
            <person name="Mastrian S.D."/>
            <person name="Matthies H.J."/>
            <person name="Hao J."/>
            <person name="Ramos H."/>
            <person name="Acharya C.R."/>
            <person name="Conrad A.L."/>
            <person name="Taylor H.L."/>
            <person name="Dejesa L.C."/>
            <person name="Shah M.K."/>
            <person name="O'Huallachain M.E."/>
            <person name="Lince M.T."/>
            <person name="Blankenship R.E."/>
            <person name="Beatty J.T."/>
            <person name="Touchman J.W."/>
        </authorList>
    </citation>
    <scope>NUCLEOTIDE SEQUENCE [LARGE SCALE GENOMIC DNA]</scope>
    <source>
        <strain>ATCC 33942 / OCh 114</strain>
    </source>
</reference>
<proteinExistence type="inferred from homology"/>
<feature type="chain" id="PRO_0000356637" description="Large ribosomal subunit protein bL33">
    <location>
        <begin position="1"/>
        <end position="55"/>
    </location>
</feature>
<evidence type="ECO:0000255" key="1">
    <source>
        <dbReference type="HAMAP-Rule" id="MF_00294"/>
    </source>
</evidence>
<evidence type="ECO:0000305" key="2"/>
<protein>
    <recommendedName>
        <fullName evidence="1">Large ribosomal subunit protein bL33</fullName>
    </recommendedName>
    <alternativeName>
        <fullName evidence="2">50S ribosomal protein L33</fullName>
    </alternativeName>
</protein>
<keyword id="KW-1185">Reference proteome</keyword>
<keyword id="KW-0687">Ribonucleoprotein</keyword>
<keyword id="KW-0689">Ribosomal protein</keyword>
<dbReference type="EMBL" id="CP000362">
    <property type="protein sequence ID" value="ABG31601.1"/>
    <property type="status" value="ALT_INIT"/>
    <property type="molecule type" value="Genomic_DNA"/>
</dbReference>
<dbReference type="RefSeq" id="WP_007119221.1">
    <property type="nucleotide sequence ID" value="NZ_FOOO01000003.1"/>
</dbReference>
<dbReference type="SMR" id="Q168J2"/>
<dbReference type="STRING" id="375451.RD1_1997"/>
<dbReference type="KEGG" id="rde:RD1_1997"/>
<dbReference type="eggNOG" id="COG0267">
    <property type="taxonomic scope" value="Bacteria"/>
</dbReference>
<dbReference type="HOGENOM" id="CLU_2525426_0_0_5"/>
<dbReference type="OrthoDB" id="21586at2"/>
<dbReference type="Proteomes" id="UP000007029">
    <property type="component" value="Chromosome"/>
</dbReference>
<dbReference type="GO" id="GO:0022625">
    <property type="term" value="C:cytosolic large ribosomal subunit"/>
    <property type="evidence" value="ECO:0007669"/>
    <property type="project" value="TreeGrafter"/>
</dbReference>
<dbReference type="GO" id="GO:0003735">
    <property type="term" value="F:structural constituent of ribosome"/>
    <property type="evidence" value="ECO:0007669"/>
    <property type="project" value="InterPro"/>
</dbReference>
<dbReference type="GO" id="GO:0006412">
    <property type="term" value="P:translation"/>
    <property type="evidence" value="ECO:0007669"/>
    <property type="project" value="UniProtKB-UniRule"/>
</dbReference>
<dbReference type="Gene3D" id="2.20.28.120">
    <property type="entry name" value="Ribosomal protein L33"/>
    <property type="match status" value="1"/>
</dbReference>
<dbReference type="HAMAP" id="MF_00294">
    <property type="entry name" value="Ribosomal_bL33"/>
    <property type="match status" value="1"/>
</dbReference>
<dbReference type="InterPro" id="IPR001705">
    <property type="entry name" value="Ribosomal_bL33"/>
</dbReference>
<dbReference type="InterPro" id="IPR018264">
    <property type="entry name" value="Ribosomal_bL33_CS"/>
</dbReference>
<dbReference type="InterPro" id="IPR038584">
    <property type="entry name" value="Ribosomal_bL33_sf"/>
</dbReference>
<dbReference type="InterPro" id="IPR011332">
    <property type="entry name" value="Ribosomal_zn-bd"/>
</dbReference>
<dbReference type="NCBIfam" id="NF001860">
    <property type="entry name" value="PRK00595.1"/>
    <property type="match status" value="1"/>
</dbReference>
<dbReference type="NCBIfam" id="TIGR01023">
    <property type="entry name" value="rpmG_bact"/>
    <property type="match status" value="1"/>
</dbReference>
<dbReference type="PANTHER" id="PTHR15238">
    <property type="entry name" value="54S RIBOSOMAL PROTEIN L39, MITOCHONDRIAL"/>
    <property type="match status" value="1"/>
</dbReference>
<dbReference type="PANTHER" id="PTHR15238:SF1">
    <property type="entry name" value="LARGE RIBOSOMAL SUBUNIT PROTEIN BL33M"/>
    <property type="match status" value="1"/>
</dbReference>
<dbReference type="Pfam" id="PF00471">
    <property type="entry name" value="Ribosomal_L33"/>
    <property type="match status" value="1"/>
</dbReference>
<dbReference type="SUPFAM" id="SSF57829">
    <property type="entry name" value="Zn-binding ribosomal proteins"/>
    <property type="match status" value="1"/>
</dbReference>
<dbReference type="PROSITE" id="PS00582">
    <property type="entry name" value="RIBOSOMAL_L33"/>
    <property type="match status" value="1"/>
</dbReference>
<name>RL33_ROSDO</name>
<comment type="similarity">
    <text evidence="1">Belongs to the bacterial ribosomal protein bL33 family.</text>
</comment>
<comment type="sequence caution" evidence="2">
    <conflict type="erroneous initiation">
        <sequence resource="EMBL-CDS" id="ABG31601"/>
    </conflict>
</comment>
<accession>Q168J2</accession>
<sequence>MAKPTTIKIRLNSSAGTGHFYVTKKNARTMTEKMVIKKYDPVARKHVEYKEGKIK</sequence>